<evidence type="ECO:0000250" key="1">
    <source>
        <dbReference type="UniProtKB" id="P00509"/>
    </source>
</evidence>
<evidence type="ECO:0000250" key="2">
    <source>
        <dbReference type="UniProtKB" id="Q02635"/>
    </source>
</evidence>
<evidence type="ECO:0000250" key="3">
    <source>
        <dbReference type="UniProtKB" id="Q56232"/>
    </source>
</evidence>
<evidence type="ECO:0000305" key="4"/>
<keyword id="KW-0032">Aminotransferase</keyword>
<keyword id="KW-0963">Cytoplasm</keyword>
<keyword id="KW-0663">Pyridoxal phosphate</keyword>
<keyword id="KW-0808">Transferase</keyword>
<reference key="1">
    <citation type="journal article" date="2006" name="PLoS Genet.">
        <title>Genome sequence of Rickettsia bellii illuminates the role of amoebae in gene exchanges between intracellular pathogens.</title>
        <authorList>
            <person name="Ogata H."/>
            <person name="La Scola B."/>
            <person name="Audic S."/>
            <person name="Renesto P."/>
            <person name="Blanc G."/>
            <person name="Robert C."/>
            <person name="Fournier P.-E."/>
            <person name="Claverie J.-M."/>
            <person name="Raoult D."/>
        </authorList>
    </citation>
    <scope>NUCLEOTIDE SEQUENCE [LARGE SCALE GENOMIC DNA]</scope>
    <source>
        <strain>RML369-C</strain>
    </source>
</reference>
<protein>
    <recommendedName>
        <fullName evidence="2">Probable aspartate/prephenate aminotransferase</fullName>
        <shortName evidence="2">AspAT / PAT</shortName>
        <ecNumber evidence="2">2.6.1.1</ecNumber>
        <ecNumber evidence="2">2.6.1.79</ecNumber>
    </recommendedName>
    <alternativeName>
        <fullName>Transaminase A</fullName>
    </alternativeName>
</protein>
<dbReference type="EC" id="2.6.1.1" evidence="2"/>
<dbReference type="EC" id="2.6.1.79" evidence="2"/>
<dbReference type="EMBL" id="CP000087">
    <property type="protein sequence ID" value="ABE05414.1"/>
    <property type="molecule type" value="Genomic_DNA"/>
</dbReference>
<dbReference type="RefSeq" id="WP_011477983.1">
    <property type="nucleotide sequence ID" value="NC_007940.1"/>
</dbReference>
<dbReference type="SMR" id="Q1RGV0"/>
<dbReference type="KEGG" id="rbe:RBE_1333"/>
<dbReference type="eggNOG" id="COG0436">
    <property type="taxonomic scope" value="Bacteria"/>
</dbReference>
<dbReference type="HOGENOM" id="CLU_017584_4_3_5"/>
<dbReference type="OrthoDB" id="9804407at2"/>
<dbReference type="Proteomes" id="UP000001951">
    <property type="component" value="Chromosome"/>
</dbReference>
<dbReference type="GO" id="GO:0005737">
    <property type="term" value="C:cytoplasm"/>
    <property type="evidence" value="ECO:0007669"/>
    <property type="project" value="UniProtKB-SubCell"/>
</dbReference>
<dbReference type="GO" id="GO:0033854">
    <property type="term" value="F:glutamate-prephenate aminotransferase activity"/>
    <property type="evidence" value="ECO:0007669"/>
    <property type="project" value="UniProtKB-EC"/>
</dbReference>
<dbReference type="GO" id="GO:0004069">
    <property type="term" value="F:L-aspartate:2-oxoglutarate aminotransferase activity"/>
    <property type="evidence" value="ECO:0007669"/>
    <property type="project" value="UniProtKB-EC"/>
</dbReference>
<dbReference type="GO" id="GO:0030170">
    <property type="term" value="F:pyridoxal phosphate binding"/>
    <property type="evidence" value="ECO:0007669"/>
    <property type="project" value="InterPro"/>
</dbReference>
<dbReference type="GO" id="GO:0006520">
    <property type="term" value="P:amino acid metabolic process"/>
    <property type="evidence" value="ECO:0007669"/>
    <property type="project" value="InterPro"/>
</dbReference>
<dbReference type="GO" id="GO:0009058">
    <property type="term" value="P:biosynthetic process"/>
    <property type="evidence" value="ECO:0007669"/>
    <property type="project" value="InterPro"/>
</dbReference>
<dbReference type="CDD" id="cd00609">
    <property type="entry name" value="AAT_like"/>
    <property type="match status" value="1"/>
</dbReference>
<dbReference type="FunFam" id="3.40.640.10:FF:000033">
    <property type="entry name" value="Aspartate aminotransferase"/>
    <property type="match status" value="1"/>
</dbReference>
<dbReference type="Gene3D" id="3.90.1150.10">
    <property type="entry name" value="Aspartate Aminotransferase, domain 1"/>
    <property type="match status" value="1"/>
</dbReference>
<dbReference type="Gene3D" id="3.40.640.10">
    <property type="entry name" value="Type I PLP-dependent aspartate aminotransferase-like (Major domain)"/>
    <property type="match status" value="1"/>
</dbReference>
<dbReference type="InterPro" id="IPR004839">
    <property type="entry name" value="Aminotransferase_I/II_large"/>
</dbReference>
<dbReference type="InterPro" id="IPR050596">
    <property type="entry name" value="AspAT/PAT-like"/>
</dbReference>
<dbReference type="InterPro" id="IPR004838">
    <property type="entry name" value="NHTrfase_class1_PyrdxlP-BS"/>
</dbReference>
<dbReference type="InterPro" id="IPR015424">
    <property type="entry name" value="PyrdxlP-dep_Trfase"/>
</dbReference>
<dbReference type="InterPro" id="IPR015421">
    <property type="entry name" value="PyrdxlP-dep_Trfase_major"/>
</dbReference>
<dbReference type="InterPro" id="IPR015422">
    <property type="entry name" value="PyrdxlP-dep_Trfase_small"/>
</dbReference>
<dbReference type="PANTHER" id="PTHR46383">
    <property type="entry name" value="ASPARTATE AMINOTRANSFERASE"/>
    <property type="match status" value="1"/>
</dbReference>
<dbReference type="PANTHER" id="PTHR46383:SF1">
    <property type="entry name" value="ASPARTATE AMINOTRANSFERASE"/>
    <property type="match status" value="1"/>
</dbReference>
<dbReference type="Pfam" id="PF00155">
    <property type="entry name" value="Aminotran_1_2"/>
    <property type="match status" value="1"/>
</dbReference>
<dbReference type="PRINTS" id="PR00753">
    <property type="entry name" value="ACCSYNTHASE"/>
</dbReference>
<dbReference type="SUPFAM" id="SSF53383">
    <property type="entry name" value="PLP-dependent transferases"/>
    <property type="match status" value="1"/>
</dbReference>
<dbReference type="PROSITE" id="PS00105">
    <property type="entry name" value="AA_TRANSFER_CLASS_1"/>
    <property type="match status" value="1"/>
</dbReference>
<proteinExistence type="inferred from homology"/>
<name>AAPAT_RICBR</name>
<gene>
    <name type="primary">aatA</name>
    <name type="ordered locus">RBE_1333</name>
</gene>
<organism>
    <name type="scientific">Rickettsia bellii (strain RML369-C)</name>
    <dbReference type="NCBI Taxonomy" id="336407"/>
    <lineage>
        <taxon>Bacteria</taxon>
        <taxon>Pseudomonadati</taxon>
        <taxon>Pseudomonadota</taxon>
        <taxon>Alphaproteobacteria</taxon>
        <taxon>Rickettsiales</taxon>
        <taxon>Rickettsiaceae</taxon>
        <taxon>Rickettsieae</taxon>
        <taxon>Rickettsia</taxon>
        <taxon>belli group</taxon>
    </lineage>
</organism>
<accession>Q1RGV0</accession>
<sequence length="399" mass="43981">MSIISTQLNAIKPSPTLAVVRKTLELKRAGIDIIALGAGEPDFDTPDNIKEAAIKAIKDGFTKYTNVEGIPALKEAIQAKFKRENNIDYDLEEIIVSTGGKQVIYNLFMASLNKGDEVIIPAPYWVSYPDMVLLAEGTPVFANCGIESNFKLSGEALEQLITPKTKWLIINSPSNPTGASYSHSELKNIAEVLRKHPYVNVMSDDIYEHITFDGFKFYTLAEIAPDLKDRIFTVNGVSKAYSMTGWRIGYGAGSKALIKAMTIIQSQSTSNPCSISQVAAVEALNGVQGYIAQNALNFEKKRDLALSILQRVKYFECYKPEGAFYLFIKCDKIFGAKTKSGKVINNSNDFGEYLLEEAKVAVVPGIAFGLEGYFRISYATSMEELEEACLRMERACGSL</sequence>
<comment type="function">
    <text evidence="2">Catalyzes the reversible conversion of aspartate and 2-oxoglutarate to glutamate and oxaloacetate. Can also transaminate prephenate in the presence of glutamate.</text>
</comment>
<comment type="catalytic activity">
    <reaction evidence="2">
        <text>L-aspartate + 2-oxoglutarate = oxaloacetate + L-glutamate</text>
        <dbReference type="Rhea" id="RHEA:21824"/>
        <dbReference type="ChEBI" id="CHEBI:16452"/>
        <dbReference type="ChEBI" id="CHEBI:16810"/>
        <dbReference type="ChEBI" id="CHEBI:29985"/>
        <dbReference type="ChEBI" id="CHEBI:29991"/>
        <dbReference type="EC" id="2.6.1.1"/>
    </reaction>
</comment>
<comment type="catalytic activity">
    <reaction evidence="2">
        <text>L-arogenate + 2-oxoglutarate = prephenate + L-glutamate</text>
        <dbReference type="Rhea" id="RHEA:22880"/>
        <dbReference type="ChEBI" id="CHEBI:16810"/>
        <dbReference type="ChEBI" id="CHEBI:29934"/>
        <dbReference type="ChEBI" id="CHEBI:29985"/>
        <dbReference type="ChEBI" id="CHEBI:58180"/>
        <dbReference type="EC" id="2.6.1.79"/>
    </reaction>
</comment>
<comment type="cofactor">
    <cofactor evidence="2">
        <name>pyridoxal 5'-phosphate</name>
        <dbReference type="ChEBI" id="CHEBI:597326"/>
    </cofactor>
</comment>
<comment type="subunit">
    <text evidence="2">Homodimer.</text>
</comment>
<comment type="subcellular location">
    <subcellularLocation>
        <location evidence="2">Cytoplasm</location>
    </subcellularLocation>
</comment>
<comment type="similarity">
    <text evidence="4">Belongs to the class-I pyridoxal-phosphate-dependent aminotransferase family.</text>
</comment>
<feature type="chain" id="PRO_0000273124" description="Probable aspartate/prephenate aminotransferase">
    <location>
        <begin position="1"/>
        <end position="399"/>
    </location>
</feature>
<feature type="binding site" evidence="1">
    <location>
        <position position="39"/>
    </location>
    <ligand>
        <name>L-aspartate</name>
        <dbReference type="ChEBI" id="CHEBI:29991"/>
    </ligand>
</feature>
<feature type="binding site" evidence="3">
    <location>
        <position position="125"/>
    </location>
    <ligand>
        <name>L-aspartate</name>
        <dbReference type="ChEBI" id="CHEBI:29991"/>
    </ligand>
</feature>
<feature type="binding site" evidence="3">
    <location>
        <position position="175"/>
    </location>
    <ligand>
        <name>L-aspartate</name>
        <dbReference type="ChEBI" id="CHEBI:29991"/>
    </ligand>
</feature>
<feature type="binding site" evidence="3">
    <location>
        <position position="375"/>
    </location>
    <ligand>
        <name>L-aspartate</name>
        <dbReference type="ChEBI" id="CHEBI:29991"/>
    </ligand>
</feature>
<feature type="site" description="Important for prephenate aminotransferase activity" evidence="3">
    <location>
        <position position="12"/>
    </location>
</feature>
<feature type="modified residue" description="N6-(pyridoxal phosphate)lysine" evidence="3">
    <location>
        <position position="239"/>
    </location>
</feature>